<name>CELF2_HUMAN</name>
<keyword id="KW-0002">3D-structure</keyword>
<keyword id="KW-0025">Alternative splicing</keyword>
<keyword id="KW-0963">Cytoplasm</keyword>
<keyword id="KW-0225">Disease variant</keyword>
<keyword id="KW-0887">Epilepsy</keyword>
<keyword id="KW-0991">Intellectual disability</keyword>
<keyword id="KW-0507">mRNA processing</keyword>
<keyword id="KW-0539">Nucleus</keyword>
<keyword id="KW-1267">Proteomics identification</keyword>
<keyword id="KW-1185">Reference proteome</keyword>
<keyword id="KW-0677">Repeat</keyword>
<keyword id="KW-0678">Repressor</keyword>
<keyword id="KW-0694">RNA-binding</keyword>
<dbReference type="EMBL" id="AF090694">
    <property type="protein sequence ID" value="AAD13761.1"/>
    <property type="molecule type" value="mRNA"/>
</dbReference>
<dbReference type="EMBL" id="AF090693">
    <property type="protein sequence ID" value="AAD13760.1"/>
    <property type="molecule type" value="mRNA"/>
</dbReference>
<dbReference type="EMBL" id="AF036956">
    <property type="protein sequence ID" value="AAD02074.1"/>
    <property type="molecule type" value="mRNA"/>
</dbReference>
<dbReference type="EMBL" id="U69546">
    <property type="protein sequence ID" value="AAB09040.1"/>
    <property type="molecule type" value="mRNA"/>
</dbReference>
<dbReference type="EMBL" id="AF295068">
    <property type="protein sequence ID" value="AAK72223.1"/>
    <property type="molecule type" value="Genomic_DNA"/>
</dbReference>
<dbReference type="EMBL" id="AF295063">
    <property type="protein sequence ID" value="AAK72223.1"/>
    <property type="status" value="JOINED"/>
    <property type="molecule type" value="Genomic_DNA"/>
</dbReference>
<dbReference type="EMBL" id="AF295064">
    <property type="protein sequence ID" value="AAK72223.1"/>
    <property type="status" value="JOINED"/>
    <property type="molecule type" value="Genomic_DNA"/>
</dbReference>
<dbReference type="EMBL" id="AF295065">
    <property type="protein sequence ID" value="AAK72223.1"/>
    <property type="status" value="JOINED"/>
    <property type="molecule type" value="Genomic_DNA"/>
</dbReference>
<dbReference type="EMBL" id="AF295066">
    <property type="protein sequence ID" value="AAK72223.1"/>
    <property type="status" value="JOINED"/>
    <property type="molecule type" value="Genomic_DNA"/>
</dbReference>
<dbReference type="EMBL" id="AF295067">
    <property type="protein sequence ID" value="AAK72223.1"/>
    <property type="status" value="JOINED"/>
    <property type="molecule type" value="Genomic_DNA"/>
</dbReference>
<dbReference type="EMBL" id="AF295068">
    <property type="protein sequence ID" value="AAK72224.1"/>
    <property type="molecule type" value="Genomic_DNA"/>
</dbReference>
<dbReference type="EMBL" id="AF295063">
    <property type="protein sequence ID" value="AAK72224.1"/>
    <property type="status" value="JOINED"/>
    <property type="molecule type" value="Genomic_DNA"/>
</dbReference>
<dbReference type="EMBL" id="AF295064">
    <property type="protein sequence ID" value="AAK72224.1"/>
    <property type="status" value="JOINED"/>
    <property type="molecule type" value="Genomic_DNA"/>
</dbReference>
<dbReference type="EMBL" id="AF295065">
    <property type="protein sequence ID" value="AAK72224.1"/>
    <property type="status" value="JOINED"/>
    <property type="molecule type" value="Genomic_DNA"/>
</dbReference>
<dbReference type="EMBL" id="AF295066">
    <property type="protein sequence ID" value="AAK72224.1"/>
    <property type="status" value="JOINED"/>
    <property type="molecule type" value="Genomic_DNA"/>
</dbReference>
<dbReference type="EMBL" id="AF295067">
    <property type="protein sequence ID" value="AAK72224.1"/>
    <property type="status" value="JOINED"/>
    <property type="molecule type" value="Genomic_DNA"/>
</dbReference>
<dbReference type="EMBL" id="AF314199">
    <property type="protein sequence ID" value="AAK72224.1"/>
    <property type="status" value="JOINED"/>
    <property type="molecule type" value="Genomic_DNA"/>
</dbReference>
<dbReference type="EMBL" id="AF295068">
    <property type="protein sequence ID" value="AAK92699.1"/>
    <property type="molecule type" value="Genomic_DNA"/>
</dbReference>
<dbReference type="EMBL" id="AF295063">
    <property type="protein sequence ID" value="AAK92699.1"/>
    <property type="status" value="JOINED"/>
    <property type="molecule type" value="Genomic_DNA"/>
</dbReference>
<dbReference type="EMBL" id="AF295064">
    <property type="protein sequence ID" value="AAK92699.1"/>
    <property type="status" value="JOINED"/>
    <property type="molecule type" value="Genomic_DNA"/>
</dbReference>
<dbReference type="EMBL" id="AF295065">
    <property type="protein sequence ID" value="AAK92699.1"/>
    <property type="status" value="JOINED"/>
    <property type="molecule type" value="Genomic_DNA"/>
</dbReference>
<dbReference type="EMBL" id="AF295066">
    <property type="protein sequence ID" value="AAK92699.1"/>
    <property type="status" value="JOINED"/>
    <property type="molecule type" value="Genomic_DNA"/>
</dbReference>
<dbReference type="EMBL" id="AF295067">
    <property type="protein sequence ID" value="AAK92699.1"/>
    <property type="status" value="JOINED"/>
    <property type="molecule type" value="Genomic_DNA"/>
</dbReference>
<dbReference type="EMBL" id="AF432906">
    <property type="protein sequence ID" value="AAL27627.1"/>
    <property type="molecule type" value="mRNA"/>
</dbReference>
<dbReference type="EMBL" id="AK316354">
    <property type="protein sequence ID" value="BAH14725.1"/>
    <property type="molecule type" value="mRNA"/>
</dbReference>
<dbReference type="EMBL" id="AC026887">
    <property type="status" value="NOT_ANNOTATED_CDS"/>
    <property type="molecule type" value="Genomic_DNA"/>
</dbReference>
<dbReference type="EMBL" id="AL136320">
    <property type="status" value="NOT_ANNOTATED_CDS"/>
    <property type="molecule type" value="Genomic_DNA"/>
</dbReference>
<dbReference type="EMBL" id="AL157704">
    <property type="status" value="NOT_ANNOTATED_CDS"/>
    <property type="molecule type" value="Genomic_DNA"/>
</dbReference>
<dbReference type="EMBL" id="CH471072">
    <property type="protein sequence ID" value="EAW86346.1"/>
    <property type="molecule type" value="Genomic_DNA"/>
</dbReference>
<dbReference type="EMBL" id="BC036391">
    <property type="protein sequence ID" value="AAH36391.1"/>
    <property type="molecule type" value="mRNA"/>
</dbReference>
<dbReference type="CCDS" id="CCDS41488.1">
    <molecule id="O95319-2"/>
</dbReference>
<dbReference type="CCDS" id="CCDS44354.1">
    <molecule id="O95319-1"/>
</dbReference>
<dbReference type="CCDS" id="CCDS44356.1">
    <molecule id="O95319-5"/>
</dbReference>
<dbReference type="RefSeq" id="NP_001020247.1">
    <molecule id="O95319-2"/>
    <property type="nucleotide sequence ID" value="NM_001025076.2"/>
</dbReference>
<dbReference type="RefSeq" id="NP_001020248.1">
    <molecule id="O95319-1"/>
    <property type="nucleotide sequence ID" value="NM_001025077.3"/>
</dbReference>
<dbReference type="RefSeq" id="NP_001077060.1">
    <molecule id="O95319-5"/>
    <property type="nucleotide sequence ID" value="NM_001083591.1"/>
</dbReference>
<dbReference type="RefSeq" id="NP_001313246.1">
    <property type="nucleotide sequence ID" value="NM_001326317.1"/>
</dbReference>
<dbReference type="RefSeq" id="NP_001313247.1">
    <molecule id="O95319-2"/>
    <property type="nucleotide sequence ID" value="NM_001326318.2"/>
</dbReference>
<dbReference type="RefSeq" id="NP_001313248.1">
    <property type="nucleotide sequence ID" value="NM_001326319.1"/>
</dbReference>
<dbReference type="RefSeq" id="NP_001313249.1">
    <molecule id="O95319-2"/>
    <property type="nucleotide sequence ID" value="NM_001326320.2"/>
</dbReference>
<dbReference type="RefSeq" id="NP_001313250.1">
    <property type="nucleotide sequence ID" value="NM_001326321.1"/>
</dbReference>
<dbReference type="RefSeq" id="NP_001313253.1">
    <molecule id="O95319-2"/>
    <property type="nucleotide sequence ID" value="NM_001326324.2"/>
</dbReference>
<dbReference type="RefSeq" id="NP_001313257.1">
    <molecule id="O95319-2"/>
    <property type="nucleotide sequence ID" value="NM_001326328.2"/>
</dbReference>
<dbReference type="RefSeq" id="NP_001313258.1">
    <property type="nucleotide sequence ID" value="NM_001326329.1"/>
</dbReference>
<dbReference type="RefSeq" id="NP_001313259.1">
    <molecule id="O95319-2"/>
    <property type="nucleotide sequence ID" value="NM_001326330.2"/>
</dbReference>
<dbReference type="RefSeq" id="NP_001313261.1">
    <molecule id="O95319-1"/>
    <property type="nucleotide sequence ID" value="NM_001326332.2"/>
</dbReference>
<dbReference type="RefSeq" id="NP_001313262.1">
    <property type="nucleotide sequence ID" value="NM_001326333.1"/>
</dbReference>
<dbReference type="RefSeq" id="NP_001313263.1">
    <molecule id="O95319-2"/>
    <property type="nucleotide sequence ID" value="NM_001326334.2"/>
</dbReference>
<dbReference type="RefSeq" id="NP_001313265.1">
    <property type="nucleotide sequence ID" value="NM_001326336.1"/>
</dbReference>
<dbReference type="RefSeq" id="NP_001313268.1">
    <property type="nucleotide sequence ID" value="NM_001326339.1"/>
</dbReference>
<dbReference type="RefSeq" id="NP_001313269.1">
    <property type="nucleotide sequence ID" value="NM_001326340.1"/>
</dbReference>
<dbReference type="RefSeq" id="NP_001313271.1">
    <property type="nucleotide sequence ID" value="NM_001326342.1"/>
</dbReference>
<dbReference type="RefSeq" id="NP_001313272.1">
    <property type="nucleotide sequence ID" value="NM_001326343.1"/>
</dbReference>
<dbReference type="RefSeq" id="NP_001313273.1">
    <property type="nucleotide sequence ID" value="NM_001326344.1"/>
</dbReference>
<dbReference type="RefSeq" id="NP_001313274.1">
    <molecule id="O95319-2"/>
    <property type="nucleotide sequence ID" value="NM_001326345.2"/>
</dbReference>
<dbReference type="RefSeq" id="NP_001313277.1">
    <property type="nucleotide sequence ID" value="NM_001326348.1"/>
</dbReference>
<dbReference type="RefSeq" id="NP_001313278.1">
    <molecule id="O95319-2"/>
    <property type="nucleotide sequence ID" value="NM_001326349.2"/>
</dbReference>
<dbReference type="RefSeq" id="NP_006552.3">
    <property type="nucleotide sequence ID" value="NM_006561.3"/>
</dbReference>
<dbReference type="RefSeq" id="XP_011517596.1">
    <property type="nucleotide sequence ID" value="XM_011519294.2"/>
</dbReference>
<dbReference type="RefSeq" id="XP_011517599.1">
    <property type="nucleotide sequence ID" value="XM_011519297.1"/>
</dbReference>
<dbReference type="RefSeq" id="XP_016871042.1">
    <property type="nucleotide sequence ID" value="XM_017015553.1"/>
</dbReference>
<dbReference type="RefSeq" id="XP_016871043.1">
    <property type="nucleotide sequence ID" value="XM_017015554.1"/>
</dbReference>
<dbReference type="RefSeq" id="XP_047280457.1">
    <molecule id="O95319-2"/>
    <property type="nucleotide sequence ID" value="XM_047424501.1"/>
</dbReference>
<dbReference type="RefSeq" id="XP_047280458.1">
    <molecule id="O95319-2"/>
    <property type="nucleotide sequence ID" value="XM_047424502.1"/>
</dbReference>
<dbReference type="RefSeq" id="XP_047280459.1">
    <molecule id="O95319-2"/>
    <property type="nucleotide sequence ID" value="XM_047424503.1"/>
</dbReference>
<dbReference type="RefSeq" id="XP_047280460.1">
    <molecule id="O95319-5"/>
    <property type="nucleotide sequence ID" value="XM_047424504.1"/>
</dbReference>
<dbReference type="RefSeq" id="XP_054220573.1">
    <molecule id="O95319-2"/>
    <property type="nucleotide sequence ID" value="XM_054364598.1"/>
</dbReference>
<dbReference type="RefSeq" id="XP_054220574.1">
    <molecule id="O95319-2"/>
    <property type="nucleotide sequence ID" value="XM_054364599.1"/>
</dbReference>
<dbReference type="RefSeq" id="XP_054220575.1">
    <molecule id="O95319-5"/>
    <property type="nucleotide sequence ID" value="XM_054364600.1"/>
</dbReference>
<dbReference type="PDB" id="2MY7">
    <property type="method" value="NMR"/>
    <property type="chains" value="A=416-508"/>
</dbReference>
<dbReference type="PDB" id="2MY8">
    <property type="method" value="NMR"/>
    <property type="chains" value="A=416-508"/>
</dbReference>
<dbReference type="PDB" id="4LJM">
    <property type="method" value="X-ray"/>
    <property type="resolution" value="3.00 A"/>
    <property type="chains" value="A/B=416-508"/>
</dbReference>
<dbReference type="PDB" id="4LMZ">
    <property type="method" value="X-ray"/>
    <property type="resolution" value="2.78 A"/>
    <property type="chains" value="A=36-211"/>
</dbReference>
<dbReference type="PDB" id="4TLQ">
    <property type="method" value="X-ray"/>
    <property type="resolution" value="2.50 A"/>
    <property type="chains" value="A/B=416-508"/>
</dbReference>
<dbReference type="PDB" id="5M8I">
    <property type="method" value="NMR"/>
    <property type="chains" value="A=416-508"/>
</dbReference>
<dbReference type="PDBsum" id="2MY7"/>
<dbReference type="PDBsum" id="2MY8"/>
<dbReference type="PDBsum" id="4LJM"/>
<dbReference type="PDBsum" id="4LMZ"/>
<dbReference type="PDBsum" id="4TLQ"/>
<dbReference type="PDBsum" id="5M8I"/>
<dbReference type="BMRB" id="O95319"/>
<dbReference type="SMR" id="O95319"/>
<dbReference type="BioGRID" id="115902">
    <property type="interactions" value="50"/>
</dbReference>
<dbReference type="FunCoup" id="O95319">
    <property type="interactions" value="1682"/>
</dbReference>
<dbReference type="IntAct" id="O95319">
    <property type="interactions" value="10"/>
</dbReference>
<dbReference type="MINT" id="O95319"/>
<dbReference type="STRING" id="9606.ENSP00000488422"/>
<dbReference type="GlyCosmos" id="O95319">
    <property type="glycosylation" value="3 sites, 2 glycans"/>
</dbReference>
<dbReference type="GlyGen" id="O95319">
    <property type="glycosylation" value="3 sites, 2 O-linked glycans (3 sites)"/>
</dbReference>
<dbReference type="iPTMnet" id="O95319"/>
<dbReference type="MetOSite" id="O95319"/>
<dbReference type="PhosphoSitePlus" id="O95319"/>
<dbReference type="BioMuta" id="CELF2"/>
<dbReference type="jPOST" id="O95319"/>
<dbReference type="MassIVE" id="O95319"/>
<dbReference type="PeptideAtlas" id="O95319"/>
<dbReference type="ProteomicsDB" id="50802">
    <molecule id="O95319-1"/>
</dbReference>
<dbReference type="ProteomicsDB" id="50803">
    <molecule id="O95319-2"/>
</dbReference>
<dbReference type="ProteomicsDB" id="50804">
    <molecule id="O95319-3"/>
</dbReference>
<dbReference type="ProteomicsDB" id="50805">
    <molecule id="O95319-4"/>
</dbReference>
<dbReference type="ProteomicsDB" id="50806">
    <molecule id="O95319-5"/>
</dbReference>
<dbReference type="Pumba" id="O95319"/>
<dbReference type="Antibodypedia" id="5602">
    <property type="antibodies" value="235 antibodies from 29 providers"/>
</dbReference>
<dbReference type="DNASU" id="10659"/>
<dbReference type="Ensembl" id="ENST00000399850.7">
    <molecule id="O95319-2"/>
    <property type="protein sequence ID" value="ENSP00000382743.3"/>
    <property type="gene ID" value="ENSG00000048740.19"/>
</dbReference>
<dbReference type="Ensembl" id="ENST00000416382.6">
    <molecule id="O95319-1"/>
    <property type="protein sequence ID" value="ENSP00000406451.2"/>
    <property type="gene ID" value="ENSG00000048740.19"/>
</dbReference>
<dbReference type="Ensembl" id="ENST00000417956.6">
    <molecule id="O95319-2"/>
    <property type="protein sequence ID" value="ENSP00000404834.3"/>
    <property type="gene ID" value="ENSG00000048740.19"/>
</dbReference>
<dbReference type="Ensembl" id="ENST00000608830.5">
    <molecule id="O95319-5"/>
    <property type="protein sequence ID" value="ENSP00000476999.1"/>
    <property type="gene ID" value="ENSG00000048740.19"/>
</dbReference>
<dbReference type="Ensembl" id="ENST00000631460.1">
    <molecule id="O95319-1"/>
    <property type="protein sequence ID" value="ENSP00000488582.1"/>
    <property type="gene ID" value="ENSG00000048740.19"/>
</dbReference>
<dbReference type="Ensembl" id="ENST00000632728.1">
    <molecule id="O95319-2"/>
    <property type="protein sequence ID" value="ENSP00000487802.1"/>
    <property type="gene ID" value="ENSG00000048740.19"/>
</dbReference>
<dbReference type="Ensembl" id="ENST00000638035.1">
    <molecule id="O95319-2"/>
    <property type="protein sequence ID" value="ENSP00000490401.1"/>
    <property type="gene ID" value="ENSG00000048740.19"/>
</dbReference>
<dbReference type="GeneID" id="10659"/>
<dbReference type="KEGG" id="hsa:10659"/>
<dbReference type="UCSC" id="uc031vxc.2">
    <molecule id="O95319-1"/>
    <property type="organism name" value="human"/>
</dbReference>
<dbReference type="AGR" id="HGNC:2550"/>
<dbReference type="CTD" id="10659"/>
<dbReference type="DisGeNET" id="10659"/>
<dbReference type="GeneCards" id="CELF2"/>
<dbReference type="HGNC" id="HGNC:2550">
    <property type="gene designation" value="CELF2"/>
</dbReference>
<dbReference type="HPA" id="ENSG00000048740">
    <property type="expression patterns" value="Tissue enhanced (bone)"/>
</dbReference>
<dbReference type="MalaCards" id="CELF2"/>
<dbReference type="MIM" id="602538">
    <property type="type" value="gene"/>
</dbReference>
<dbReference type="MIM" id="619561">
    <property type="type" value="phenotype"/>
</dbReference>
<dbReference type="neXtProt" id="NX_O95319"/>
<dbReference type="OpenTargets" id="ENSG00000048740"/>
<dbReference type="Orphanet" id="442835">
    <property type="disease" value="Non-specific early-onset epileptic encephalopathy"/>
</dbReference>
<dbReference type="PharmGKB" id="PA27046"/>
<dbReference type="VEuPathDB" id="HostDB:ENSG00000048740"/>
<dbReference type="eggNOG" id="KOG0144">
    <property type="taxonomic scope" value="Eukaryota"/>
</dbReference>
<dbReference type="GeneTree" id="ENSGT00940000155461"/>
<dbReference type="HOGENOM" id="CLU_015367_0_2_1"/>
<dbReference type="InParanoid" id="O95319"/>
<dbReference type="OMA" id="PWKQYFS"/>
<dbReference type="OrthoDB" id="410044at2759"/>
<dbReference type="PAN-GO" id="O95319">
    <property type="GO annotations" value="6 GO annotations based on evolutionary models"/>
</dbReference>
<dbReference type="PhylomeDB" id="O95319"/>
<dbReference type="PathwayCommons" id="O95319"/>
<dbReference type="SignaLink" id="O95319"/>
<dbReference type="SIGNOR" id="O95319"/>
<dbReference type="BioGRID-ORCS" id="10659">
    <property type="hits" value="11 hits in 1154 CRISPR screens"/>
</dbReference>
<dbReference type="CD-CODE" id="DEE660B4">
    <property type="entry name" value="Stress granule"/>
</dbReference>
<dbReference type="ChiTaRS" id="CELF2">
    <property type="organism name" value="human"/>
</dbReference>
<dbReference type="EvolutionaryTrace" id="O95319"/>
<dbReference type="GeneWiki" id="CUGBP2"/>
<dbReference type="GenomeRNAi" id="10659"/>
<dbReference type="Pharos" id="O95319">
    <property type="development level" value="Tbio"/>
</dbReference>
<dbReference type="PRO" id="PR:O95319"/>
<dbReference type="Proteomes" id="UP000005640">
    <property type="component" value="Chromosome 10"/>
</dbReference>
<dbReference type="RNAct" id="O95319">
    <property type="molecule type" value="protein"/>
</dbReference>
<dbReference type="Bgee" id="ENSG00000048740">
    <property type="expression patterns" value="Expressed in CA1 field of hippocampus and 215 other cell types or tissues"/>
</dbReference>
<dbReference type="ExpressionAtlas" id="O95319">
    <property type="expression patterns" value="baseline and differential"/>
</dbReference>
<dbReference type="GO" id="GO:0005737">
    <property type="term" value="C:cytoplasm"/>
    <property type="evidence" value="ECO:0000318"/>
    <property type="project" value="GO_Central"/>
</dbReference>
<dbReference type="GO" id="GO:0090543">
    <property type="term" value="C:Flemming body"/>
    <property type="evidence" value="ECO:0000314"/>
    <property type="project" value="HPA"/>
</dbReference>
<dbReference type="GO" id="GO:0043231">
    <property type="term" value="C:intracellular membrane-bounded organelle"/>
    <property type="evidence" value="ECO:0000314"/>
    <property type="project" value="HPA"/>
</dbReference>
<dbReference type="GO" id="GO:0005654">
    <property type="term" value="C:nucleoplasm"/>
    <property type="evidence" value="ECO:0000314"/>
    <property type="project" value="HPA"/>
</dbReference>
<dbReference type="GO" id="GO:0005634">
    <property type="term" value="C:nucleus"/>
    <property type="evidence" value="ECO:0000314"/>
    <property type="project" value="UniProtKB"/>
</dbReference>
<dbReference type="GO" id="GO:1990904">
    <property type="term" value="C:ribonucleoprotein complex"/>
    <property type="evidence" value="ECO:0000318"/>
    <property type="project" value="GO_Central"/>
</dbReference>
<dbReference type="GO" id="GO:0003730">
    <property type="term" value="F:mRNA 3'-UTR binding"/>
    <property type="evidence" value="ECO:0000318"/>
    <property type="project" value="GO_Central"/>
</dbReference>
<dbReference type="GO" id="GO:0036002">
    <property type="term" value="F:pre-mRNA binding"/>
    <property type="evidence" value="ECO:0000314"/>
    <property type="project" value="UniProtKB"/>
</dbReference>
<dbReference type="GO" id="GO:0003723">
    <property type="term" value="F:RNA binding"/>
    <property type="evidence" value="ECO:0007005"/>
    <property type="project" value="UniProtKB"/>
</dbReference>
<dbReference type="GO" id="GO:0006376">
    <property type="term" value="P:mRNA splice site recognition"/>
    <property type="evidence" value="ECO:0000314"/>
    <property type="project" value="UniProtKB"/>
</dbReference>
<dbReference type="GO" id="GO:0000381">
    <property type="term" value="P:regulation of alternative mRNA splicing, via spliceosome"/>
    <property type="evidence" value="ECO:0000318"/>
    <property type="project" value="GO_Central"/>
</dbReference>
<dbReference type="GO" id="GO:0008016">
    <property type="term" value="P:regulation of heart contraction"/>
    <property type="evidence" value="ECO:0000304"/>
    <property type="project" value="ProtInc"/>
</dbReference>
<dbReference type="GO" id="GO:0006396">
    <property type="term" value="P:RNA processing"/>
    <property type="evidence" value="ECO:0000304"/>
    <property type="project" value="ProtInc"/>
</dbReference>
<dbReference type="CDD" id="cd12631">
    <property type="entry name" value="RRM1_CELF1_2_Bruno"/>
    <property type="match status" value="1"/>
</dbReference>
<dbReference type="CDD" id="cd12634">
    <property type="entry name" value="RRM2_CELF1_2"/>
    <property type="match status" value="1"/>
</dbReference>
<dbReference type="CDD" id="cd12638">
    <property type="entry name" value="RRM3_CELF1_2"/>
    <property type="match status" value="1"/>
</dbReference>
<dbReference type="FunFam" id="3.30.70.330:FF:000013">
    <property type="entry name" value="CUGBP Elav-like family member 1 isoform 2"/>
    <property type="match status" value="1"/>
</dbReference>
<dbReference type="FunFam" id="3.30.70.330:FF:000015">
    <property type="entry name" value="CUGBP Elav-like family member 1 isoform 2"/>
    <property type="match status" value="1"/>
</dbReference>
<dbReference type="FunFam" id="3.30.70.330:FF:000016">
    <property type="entry name" value="CUGBP Elav-like family member 1 isoform 2"/>
    <property type="match status" value="1"/>
</dbReference>
<dbReference type="Gene3D" id="3.30.70.330">
    <property type="match status" value="3"/>
</dbReference>
<dbReference type="InterPro" id="IPR034196">
    <property type="entry name" value="CELF1/2_RRM1"/>
</dbReference>
<dbReference type="InterPro" id="IPR034198">
    <property type="entry name" value="CELF1/2_RRM2"/>
</dbReference>
<dbReference type="InterPro" id="IPR034199">
    <property type="entry name" value="CELF1/2_RRM3"/>
</dbReference>
<dbReference type="InterPro" id="IPR002343">
    <property type="entry name" value="Hud_Sxl_RNA"/>
</dbReference>
<dbReference type="InterPro" id="IPR012677">
    <property type="entry name" value="Nucleotide-bd_a/b_plait_sf"/>
</dbReference>
<dbReference type="InterPro" id="IPR035979">
    <property type="entry name" value="RBD_domain_sf"/>
</dbReference>
<dbReference type="InterPro" id="IPR000504">
    <property type="entry name" value="RRM_dom"/>
</dbReference>
<dbReference type="PANTHER" id="PTHR24012">
    <property type="entry name" value="RNA BINDING PROTEIN"/>
    <property type="match status" value="1"/>
</dbReference>
<dbReference type="Pfam" id="PF00076">
    <property type="entry name" value="RRM_1"/>
    <property type="match status" value="3"/>
</dbReference>
<dbReference type="PRINTS" id="PR00961">
    <property type="entry name" value="HUDSXLRNA"/>
</dbReference>
<dbReference type="SMART" id="SM00360">
    <property type="entry name" value="RRM"/>
    <property type="match status" value="3"/>
</dbReference>
<dbReference type="SUPFAM" id="SSF54928">
    <property type="entry name" value="RNA-binding domain, RBD"/>
    <property type="match status" value="2"/>
</dbReference>
<dbReference type="PROSITE" id="PS50102">
    <property type="entry name" value="RRM"/>
    <property type="match status" value="3"/>
</dbReference>
<protein>
    <recommendedName>
        <fullName>CUGBP Elav-like family member 2</fullName>
        <shortName>CELF-2</shortName>
    </recommendedName>
    <alternativeName>
        <fullName>Bruno-like protein 3</fullName>
    </alternativeName>
    <alternativeName>
        <fullName>CUG triplet repeat RNA-binding protein 2</fullName>
        <shortName>CUG-BP2</shortName>
    </alternativeName>
    <alternativeName>
        <fullName>CUG-BP- and ETR-3-like factor 2</fullName>
    </alternativeName>
    <alternativeName>
        <fullName>ELAV-type RNA-binding protein 3</fullName>
        <shortName>ETR-3</shortName>
    </alternativeName>
    <alternativeName>
        <fullName>Neuroblastoma apoptosis-related RNA-binding protein</fullName>
        <shortName>hNAPOR</shortName>
    </alternativeName>
    <alternativeName>
        <fullName>RNA-binding protein BRUNOL-3</fullName>
    </alternativeName>
</protein>
<gene>
    <name type="primary">CELF2</name>
    <name type="synonym">BRUNOL3</name>
    <name type="synonym">CUGBP2</name>
    <name type="synonym">ETR3</name>
    <name type="synonym">NAPOR</name>
</gene>
<feature type="chain" id="PRO_0000295189" description="CUGBP Elav-like family member 2">
    <location>
        <begin position="1"/>
        <end position="508"/>
    </location>
</feature>
<feature type="domain" description="RRM 1" evidence="4">
    <location>
        <begin position="40"/>
        <end position="123"/>
    </location>
</feature>
<feature type="domain" description="RRM 2" evidence="4">
    <location>
        <begin position="132"/>
        <end position="212"/>
    </location>
</feature>
<feature type="domain" description="RRM 3" evidence="4">
    <location>
        <begin position="423"/>
        <end position="501"/>
    </location>
</feature>
<feature type="region of interest" description="Necessary for RNA-binding, TNNT2 exon 5 and NMDA R1 exon 21 inclusion">
    <location>
        <begin position="1"/>
        <end position="283"/>
    </location>
</feature>
<feature type="region of interest" description="Necessary for RNA-binding, TNNT2 exon 5 and NMDA R1 exon 21 inclusion">
    <location>
        <begin position="357"/>
        <end position="508"/>
    </location>
</feature>
<feature type="splice variant" id="VSP_026796" description="In isoform 2 and isoform 5." evidence="19 20 21 24">
    <location>
        <begin position="1"/>
        <end position="24"/>
    </location>
</feature>
<feature type="splice variant" id="VSP_026797" description="In isoform 3 and isoform 4." evidence="22 23">
    <original>MRCPKSAVTMRNEELLLS</original>
    <variation>MMVEGRLLVPDRI</variation>
    <location>
        <begin position="1"/>
        <end position="18"/>
    </location>
</feature>
<feature type="splice variant" id="VSP_026798" description="In isoform 2 and isoform 4." evidence="19 20 23">
    <original>A</original>
    <variation>AVAQMLS</variation>
    <location>
        <position position="358"/>
    </location>
</feature>
<feature type="splice variant" id="VSP_026799" description="In isoform 3." evidence="22">
    <original>A</original>
    <variation>AGTINTPRSKRLLLPKDNN</variation>
    <location>
        <position position="358"/>
    </location>
</feature>
<feature type="splice variant" id="VSP_026800" description="In isoform 5." evidence="21 24">
    <original>G</original>
    <variation>GTINS</variation>
    <location>
        <position position="359"/>
    </location>
</feature>
<feature type="sequence variant" id="VAR_052202" description="In dbSNP:rs1050942." evidence="6 18">
    <original>D</original>
    <variation>H</variation>
    <location>
        <position position="438"/>
    </location>
</feature>
<feature type="sequence variant" id="VAR_086490" description="In DEE97; uncertain significance; mislocalized to the cytoplasm." evidence="17">
    <original>R</original>
    <variation>G</variation>
    <location>
        <position position="493"/>
    </location>
</feature>
<feature type="sequence variant" id="VAR_086491" description="In DEE97; mislocalized to the cytoplasm." evidence="17">
    <original>P</original>
    <variation>S</variation>
    <location>
        <position position="507"/>
    </location>
</feature>
<feature type="strand" evidence="26">
    <location>
        <begin position="42"/>
        <end position="45"/>
    </location>
</feature>
<feature type="helix" evidence="26">
    <location>
        <begin position="53"/>
        <end position="60"/>
    </location>
</feature>
<feature type="helix" evidence="26">
    <location>
        <begin position="61"/>
        <end position="63"/>
    </location>
</feature>
<feature type="strand" evidence="26">
    <location>
        <begin position="66"/>
        <end position="74"/>
    </location>
</feature>
<feature type="strand" evidence="26">
    <location>
        <begin position="76"/>
        <end position="79"/>
    </location>
</feature>
<feature type="strand" evidence="26">
    <location>
        <begin position="81"/>
        <end position="92"/>
    </location>
</feature>
<feature type="helix" evidence="26">
    <location>
        <begin position="93"/>
        <end position="103"/>
    </location>
</feature>
<feature type="turn" evidence="26">
    <location>
        <begin position="104"/>
        <end position="106"/>
    </location>
</feature>
<feature type="strand" evidence="26">
    <location>
        <begin position="117"/>
        <end position="120"/>
    </location>
</feature>
<feature type="helix" evidence="26">
    <location>
        <begin position="122"/>
        <end position="124"/>
    </location>
</feature>
<feature type="helix" evidence="26">
    <location>
        <begin position="129"/>
        <end position="131"/>
    </location>
</feature>
<feature type="strand" evidence="26">
    <location>
        <begin position="133"/>
        <end position="138"/>
    </location>
</feature>
<feature type="helix" evidence="26">
    <location>
        <begin position="145"/>
        <end position="152"/>
    </location>
</feature>
<feature type="helix" evidence="26">
    <location>
        <begin position="153"/>
        <end position="155"/>
    </location>
</feature>
<feature type="strand" evidence="26">
    <location>
        <begin position="158"/>
        <end position="165"/>
    </location>
</feature>
<feature type="strand" evidence="26">
    <location>
        <begin position="167"/>
        <end position="169"/>
    </location>
</feature>
<feature type="strand" evidence="26">
    <location>
        <begin position="171"/>
        <end position="182"/>
    </location>
</feature>
<feature type="helix" evidence="26">
    <location>
        <begin position="183"/>
        <end position="192"/>
    </location>
</feature>
<feature type="strand" evidence="26">
    <location>
        <begin position="206"/>
        <end position="209"/>
    </location>
</feature>
<feature type="strand" evidence="27">
    <location>
        <begin position="424"/>
        <end position="429"/>
    </location>
</feature>
<feature type="helix" evidence="27">
    <location>
        <begin position="436"/>
        <end position="443"/>
    </location>
</feature>
<feature type="helix" evidence="27">
    <location>
        <begin position="444"/>
        <end position="446"/>
    </location>
</feature>
<feature type="strand" evidence="27">
    <location>
        <begin position="449"/>
        <end position="456"/>
    </location>
</feature>
<feature type="turn" evidence="27">
    <location>
        <begin position="458"/>
        <end position="460"/>
    </location>
</feature>
<feature type="strand" evidence="27">
    <location>
        <begin position="463"/>
        <end position="473"/>
    </location>
</feature>
<feature type="helix" evidence="27">
    <location>
        <begin position="474"/>
        <end position="484"/>
    </location>
</feature>
<feature type="strand" evidence="27">
    <location>
        <begin position="495"/>
        <end position="498"/>
    </location>
</feature>
<feature type="strand" evidence="28">
    <location>
        <begin position="504"/>
        <end position="506"/>
    </location>
</feature>
<sequence length="508" mass="54285">MRCPKSAVTMRNEELLLSNGTANKMNGALDHSDQPDPDAIKMFVGQIPRSWSEKELKELFEPYGAVYQINVLRDRSQNPPQSKGCCFVTFYTRKAALEAQNALHNIKTLPGMHHPIQMKPADSEKSNAVEDRKLFIGMVSKKCNENDIRVMFSPFGQIEECRILRGPDGLSRGCAFVTFSTRAMAQNAIKAMHQSQTMEGCSSPIVVKFADTQKDKEQRRLQQQLAQQMQQLNTATWGNLTGLGGLTPQYLALLQQATSSSNLGAFSGIQQMAGMNALQLQNLATLAAAAAAAQTSATSTNANPLSTTSSALGALTSPVAASTPNSTAGAAMNSLTSLGTLQGLAGATVGLNNINALAGMAALNGGLGATGLTNGTAGTMDALTQAYSGIQQYAAAALPTLYSQSLLQQQSAAGSQKEGPEGANLFIYHLPQEFGDQDILQMFMPFGNVISAKVFIDKQTNLSKCFGFVSYDNPVSAQAAIQAMNGFQIGMKRLKVQLKRSKNDSKPY</sequence>
<proteinExistence type="evidence at protein level"/>
<comment type="function">
    <text evidence="3 7 9 10 11 12 13 14 16">RNA-binding protein implicated in the regulation of several post-transcriptional events. Involved in pre-mRNA alternative splicing, mRNA translation and stability. Mediates exon inclusion and/or exclusion in pre-mRNA that are subject to tissue-specific and developmentally regulated alternative splicing. Specifically activates exon 5 inclusion of TNNT2 in embryonic, but not adult, skeletal muscle. Activates TNNT2 exon 5 inclusion by antagonizing the repressive effect of PTB. Acts both as an activator and as a repressor of a pair of coregulated exons: promotes inclusion of the smooth muscle (SM) exon but exclusion of the non-muscle (NM) exon in actinin pre-mRNAs. Promotes inclusion of exonS 21 and exclusion of exon 5 of the NMDA receptor R1 pre-mRNA. Involved in the apoB RNA editing activity. Increases COX2 mRNA stability and inhibits COX2 mRNA translation in epithelial cells after radiation injury (By similarity). Modulates the cellular apoptosis program by regulating COX2-mediated prostaglandin E2 (PGE2) expression (By similarity). Binds to (CUG)n triplet repeats in the 3'-UTR of transcripts such as DMPK. Binds to the muscle-specific splicing enhancer (MSE) intronic sites flanking the TNNT2 alternative exon 5. Binds preferentially to UG-rich sequences, in particular UG repeat and UGUU motifs. Binds to apoB mRNA, specifically to AU-rich sequences located immediately upstream of the edited cytidine. Binds AU-rich sequences in the 3'-UTR of COX2 mRNA (By similarity). Binds to an intronic RNA element responsible for the silencing of exon 21 splicing (By similarity). Binds to (CUG)n repeats (By similarity). May be a specific regulator of miRNA biogenesis. Binds to primary microRNA pri-MIR140 and, with CELF1, negatively regulates the processing to mature miRNA (PubMed:28431233).</text>
</comment>
<comment type="subunit">
    <text evidence="1">Interacts with A1CF.</text>
</comment>
<comment type="subcellular location">
    <subcellularLocation>
        <location evidence="17">Nucleus</location>
    </subcellularLocation>
    <subcellularLocation>
        <location evidence="2 3">Cytoplasm</location>
    </subcellularLocation>
    <text evidence="1">Accumulates in the cytoplasm after ionizing radiation (By similarity). Colocalizes with APOBEC1 and A1CF. RNA-binding activity is detected in both nuclear and cytoplasmic compartments.</text>
</comment>
<comment type="alternative products">
    <event type="alternative splicing"/>
    <isoform>
        <id>O95319-1</id>
        <name>1</name>
        <name>NAPOR-3</name>
        <sequence type="displayed"/>
    </isoform>
    <isoform>
        <id>O95319-2</id>
        <name>2</name>
        <name>NAPOR-1</name>
        <sequence type="described" ref="VSP_026796 VSP_026798"/>
    </isoform>
    <isoform>
        <id>O95319-3</id>
        <name>3</name>
        <sequence type="described" ref="VSP_026797 VSP_026799"/>
    </isoform>
    <isoform>
        <id>O95319-4</id>
        <name>4</name>
        <name>NAPOR-2</name>
        <sequence type="described" ref="VSP_026797 VSP_026798"/>
    </isoform>
    <isoform>
        <id>O95319-5</id>
        <name>5</name>
        <sequence type="described" ref="VSP_026796 VSP_026800"/>
    </isoform>
</comment>
<comment type="tissue specificity">
    <text evidence="5 6 7 8 15">Expressed in frontal cortex. Isoform 1 is expressed in brain and lung. Isoform 2 is expressed in heart, brain, placenta, lung, liver, kidney, skeletal muscle and pancreas. Isoform 4 is expressed in heart, lung, skeletal muscle, kidney and pancreas.</text>
</comment>
<comment type="developmental stage">
    <text evidence="5 8">Isoform 1 is expressed in fetal brain. Isoform 2 is expressed in fetal heart, brain, thymus, lung, liver, skeletal muscle, kidney and spleen. Isoform 4 is expressed in fetal heart, brain, thymus, lung and skeletal muscle.</text>
</comment>
<comment type="disease" evidence="17">
    <disease id="DI-06248">
        <name>Developmental and epileptic encephalopathy 97</name>
        <acronym>DEE97</acronym>
        <description>A form of epileptic encephalopathy, a heterogeneous group of early-onset epilepsies characterized by refractory seizures, neurodevelopmental impairment, and poor prognosis. Development is normal prior to seizure onset, after which cognitive and motor delays become apparent. DEE97 is an autosomal dominant form.</description>
        <dbReference type="MIM" id="619561"/>
    </disease>
    <text>The disease is caused by variants affecting the gene represented in this entry.</text>
</comment>
<comment type="similarity">
    <text evidence="25">Belongs to the CELF/BRUNOL family.</text>
</comment>
<evidence type="ECO:0000250" key="1"/>
<evidence type="ECO:0000250" key="2">
    <source>
        <dbReference type="UniProtKB" id="Q7T2T1"/>
    </source>
</evidence>
<evidence type="ECO:0000250" key="3">
    <source>
        <dbReference type="UniProtKB" id="Q9Z0H4"/>
    </source>
</evidence>
<evidence type="ECO:0000255" key="4">
    <source>
        <dbReference type="PROSITE-ProRule" id="PRU00176"/>
    </source>
</evidence>
<evidence type="ECO:0000269" key="5">
    <source>
    </source>
</evidence>
<evidence type="ECO:0000269" key="6">
    <source>
    </source>
</evidence>
<evidence type="ECO:0000269" key="7">
    <source>
    </source>
</evidence>
<evidence type="ECO:0000269" key="8">
    <source>
    </source>
</evidence>
<evidence type="ECO:0000269" key="9">
    <source>
    </source>
</evidence>
<evidence type="ECO:0000269" key="10">
    <source>
    </source>
</evidence>
<evidence type="ECO:0000269" key="11">
    <source>
    </source>
</evidence>
<evidence type="ECO:0000269" key="12">
    <source>
    </source>
</evidence>
<evidence type="ECO:0000269" key="13">
    <source>
    </source>
</evidence>
<evidence type="ECO:0000269" key="14">
    <source>
    </source>
</evidence>
<evidence type="ECO:0000269" key="15">
    <source>
    </source>
</evidence>
<evidence type="ECO:0000269" key="16">
    <source>
    </source>
</evidence>
<evidence type="ECO:0000269" key="17">
    <source>
    </source>
</evidence>
<evidence type="ECO:0000269" key="18">
    <source>
    </source>
</evidence>
<evidence type="ECO:0000303" key="19">
    <source>
    </source>
</evidence>
<evidence type="ECO:0000303" key="20">
    <source>
    </source>
</evidence>
<evidence type="ECO:0000303" key="21">
    <source>
    </source>
</evidence>
<evidence type="ECO:0000303" key="22">
    <source>
    </source>
</evidence>
<evidence type="ECO:0000303" key="23">
    <source>
    </source>
</evidence>
<evidence type="ECO:0000303" key="24">
    <source ref="5"/>
</evidence>
<evidence type="ECO:0000305" key="25"/>
<evidence type="ECO:0007829" key="26">
    <source>
        <dbReference type="PDB" id="4LMZ"/>
    </source>
</evidence>
<evidence type="ECO:0007829" key="27">
    <source>
        <dbReference type="PDB" id="4TLQ"/>
    </source>
</evidence>
<evidence type="ECO:0007829" key="28">
    <source>
        <dbReference type="PDB" id="5M8I"/>
    </source>
</evidence>
<accession>O95319</accession>
<accession>B7ZAN9</accession>
<accession>Q7KYU4</accession>
<accession>Q8N499</accession>
<accession>Q92950</accession>
<accession>Q96NW9</accession>
<accession>Q96RQ5</accession>
<accession>Q96RQ6</accession>
<accession>Q9UL67</accession>
<reference key="1">
    <citation type="journal article" date="1998" name="Gene">
        <title>Fluorescent differential display analysis of gene expression in apoptotic neuroblastoma cells.</title>
        <authorList>
            <person name="Choi D.-K."/>
            <person name="Ito T."/>
            <person name="Mitsui Y."/>
            <person name="Sakaki Y."/>
        </authorList>
    </citation>
    <scope>NUCLEOTIDE SEQUENCE [MRNA] (ISOFORM 4)</scope>
    <scope>VARIANT HIS-438</scope>
    <source>
        <tissue>Brain</tissue>
    </source>
</reference>
<reference key="2">
    <citation type="journal article" date="1999" name="Gene">
        <title>Developmentally-regulated expression of mNapor encoding an apoptosis-induced ELAV-type RNA binding protein.</title>
        <authorList>
            <person name="Choi D.-K."/>
            <person name="Ito T."/>
            <person name="Tsukahara F."/>
            <person name="Hirai M."/>
            <person name="Sakaki Y."/>
        </authorList>
    </citation>
    <scope>NUCLEOTIDE SEQUENCE [MRNA] (ISOFORMS 1 AND 2)</scope>
    <scope>TISSUE SPECIFICITY</scope>
    <scope>DEVELOPMENTAL STAGE</scope>
    <source>
        <tissue>Brain</tissue>
    </source>
</reference>
<reference key="3">
    <citation type="journal article" date="2000" name="J. Biol. Chem.">
        <title>A family of human RNA-binding proteins related to the Drosophila Bruno translational regulator.</title>
        <authorList>
            <person name="Good P.J."/>
            <person name="Chen Q."/>
            <person name="Warner S.J."/>
            <person name="Herring D.C."/>
        </authorList>
    </citation>
    <scope>NUCLEOTIDE SEQUENCE [MRNA] (ISOFORM 2)</scope>
    <scope>TISSUE SPECIFICITY</scope>
    <scope>VARIANT HIS-438</scope>
    <source>
        <tissue>Heart</tissue>
    </source>
</reference>
<reference key="4">
    <citation type="journal article" date="2001" name="Genomics">
        <title>Genomic organization and isoform-specific tissue expression of human NAPOR (CUGBP2) as a candidate gene for familial arrhythmogenic right ventricular dysplasia.</title>
        <authorList>
            <person name="Li D."/>
            <person name="Bachinski L.L."/>
            <person name="Roberts R."/>
        </authorList>
    </citation>
    <scope>NUCLEOTIDE SEQUENCE [GENOMIC DNA]</scope>
    <scope>TISSUE SPECIFICITY</scope>
    <scope>DEVELOPMENTAL STAGE</scope>
</reference>
<reference key="5">
    <citation type="submission" date="2001-10" db="EMBL/GenBank/DDBJ databases">
        <title>Mutation screening of the NAPOR gene: a candidate for adult-onset primary open angle glaucoma (GLC1E) on 10p14.</title>
        <authorList>
            <person name="Sarfarazi M."/>
            <person name="Rezaie T."/>
        </authorList>
    </citation>
    <scope>NUCLEOTIDE SEQUENCE [MRNA] (ISOFORM 5)</scope>
</reference>
<reference key="6">
    <citation type="journal article" date="2004" name="Nat. Genet.">
        <title>Complete sequencing and characterization of 21,243 full-length human cDNAs.</title>
        <authorList>
            <person name="Ota T."/>
            <person name="Suzuki Y."/>
            <person name="Nishikawa T."/>
            <person name="Otsuki T."/>
            <person name="Sugiyama T."/>
            <person name="Irie R."/>
            <person name="Wakamatsu A."/>
            <person name="Hayashi K."/>
            <person name="Sato H."/>
            <person name="Nagai K."/>
            <person name="Kimura K."/>
            <person name="Makita H."/>
            <person name="Sekine M."/>
            <person name="Obayashi M."/>
            <person name="Nishi T."/>
            <person name="Shibahara T."/>
            <person name="Tanaka T."/>
            <person name="Ishii S."/>
            <person name="Yamamoto J."/>
            <person name="Saito K."/>
            <person name="Kawai Y."/>
            <person name="Isono Y."/>
            <person name="Nakamura Y."/>
            <person name="Nagahari K."/>
            <person name="Murakami K."/>
            <person name="Yasuda T."/>
            <person name="Iwayanagi T."/>
            <person name="Wagatsuma M."/>
            <person name="Shiratori A."/>
            <person name="Sudo H."/>
            <person name="Hosoiri T."/>
            <person name="Kaku Y."/>
            <person name="Kodaira H."/>
            <person name="Kondo H."/>
            <person name="Sugawara M."/>
            <person name="Takahashi M."/>
            <person name="Kanda K."/>
            <person name="Yokoi T."/>
            <person name="Furuya T."/>
            <person name="Kikkawa E."/>
            <person name="Omura Y."/>
            <person name="Abe K."/>
            <person name="Kamihara K."/>
            <person name="Katsuta N."/>
            <person name="Sato K."/>
            <person name="Tanikawa M."/>
            <person name="Yamazaki M."/>
            <person name="Ninomiya K."/>
            <person name="Ishibashi T."/>
            <person name="Yamashita H."/>
            <person name="Murakawa K."/>
            <person name="Fujimori K."/>
            <person name="Tanai H."/>
            <person name="Kimata M."/>
            <person name="Watanabe M."/>
            <person name="Hiraoka S."/>
            <person name="Chiba Y."/>
            <person name="Ishida S."/>
            <person name="Ono Y."/>
            <person name="Takiguchi S."/>
            <person name="Watanabe S."/>
            <person name="Yosida M."/>
            <person name="Hotuta T."/>
            <person name="Kusano J."/>
            <person name="Kanehori K."/>
            <person name="Takahashi-Fujii A."/>
            <person name="Hara H."/>
            <person name="Tanase T.-O."/>
            <person name="Nomura Y."/>
            <person name="Togiya S."/>
            <person name="Komai F."/>
            <person name="Hara R."/>
            <person name="Takeuchi K."/>
            <person name="Arita M."/>
            <person name="Imose N."/>
            <person name="Musashino K."/>
            <person name="Yuuki H."/>
            <person name="Oshima A."/>
            <person name="Sasaki N."/>
            <person name="Aotsuka S."/>
            <person name="Yoshikawa Y."/>
            <person name="Matsunawa H."/>
            <person name="Ichihara T."/>
            <person name="Shiohata N."/>
            <person name="Sano S."/>
            <person name="Moriya S."/>
            <person name="Momiyama H."/>
            <person name="Satoh N."/>
            <person name="Takami S."/>
            <person name="Terashima Y."/>
            <person name="Suzuki O."/>
            <person name="Nakagawa S."/>
            <person name="Senoh A."/>
            <person name="Mizoguchi H."/>
            <person name="Goto Y."/>
            <person name="Shimizu F."/>
            <person name="Wakebe H."/>
            <person name="Hishigaki H."/>
            <person name="Watanabe T."/>
            <person name="Sugiyama A."/>
            <person name="Takemoto M."/>
            <person name="Kawakami B."/>
            <person name="Yamazaki M."/>
            <person name="Watanabe K."/>
            <person name="Kumagai A."/>
            <person name="Itakura S."/>
            <person name="Fukuzumi Y."/>
            <person name="Fujimori Y."/>
            <person name="Komiyama M."/>
            <person name="Tashiro H."/>
            <person name="Tanigami A."/>
            <person name="Fujiwara T."/>
            <person name="Ono T."/>
            <person name="Yamada K."/>
            <person name="Fujii Y."/>
            <person name="Ozaki K."/>
            <person name="Hirao M."/>
            <person name="Ohmori Y."/>
            <person name="Kawabata A."/>
            <person name="Hikiji T."/>
            <person name="Kobatake N."/>
            <person name="Inagaki H."/>
            <person name="Ikema Y."/>
            <person name="Okamoto S."/>
            <person name="Okitani R."/>
            <person name="Kawakami T."/>
            <person name="Noguchi S."/>
            <person name="Itoh T."/>
            <person name="Shigeta K."/>
            <person name="Senba T."/>
            <person name="Matsumura K."/>
            <person name="Nakajima Y."/>
            <person name="Mizuno T."/>
            <person name="Morinaga M."/>
            <person name="Sasaki M."/>
            <person name="Togashi T."/>
            <person name="Oyama M."/>
            <person name="Hata H."/>
            <person name="Watanabe M."/>
            <person name="Komatsu T."/>
            <person name="Mizushima-Sugano J."/>
            <person name="Satoh T."/>
            <person name="Shirai Y."/>
            <person name="Takahashi Y."/>
            <person name="Nakagawa K."/>
            <person name="Okumura K."/>
            <person name="Nagase T."/>
            <person name="Nomura N."/>
            <person name="Kikuchi H."/>
            <person name="Masuho Y."/>
            <person name="Yamashita R."/>
            <person name="Nakai K."/>
            <person name="Yada T."/>
            <person name="Nakamura Y."/>
            <person name="Ohara O."/>
            <person name="Isogai T."/>
            <person name="Sugano S."/>
        </authorList>
    </citation>
    <scope>NUCLEOTIDE SEQUENCE [LARGE SCALE MRNA] (ISOFORM 5)</scope>
    <source>
        <tissue>Synovium</tissue>
    </source>
</reference>
<reference key="7">
    <citation type="journal article" date="2004" name="Nature">
        <title>The DNA sequence and comparative analysis of human chromosome 10.</title>
        <authorList>
            <person name="Deloukas P."/>
            <person name="Earthrowl M.E."/>
            <person name="Grafham D.V."/>
            <person name="Rubenfield M."/>
            <person name="French L."/>
            <person name="Steward C.A."/>
            <person name="Sims S.K."/>
            <person name="Jones M.C."/>
            <person name="Searle S."/>
            <person name="Scott C."/>
            <person name="Howe K."/>
            <person name="Hunt S.E."/>
            <person name="Andrews T.D."/>
            <person name="Gilbert J.G.R."/>
            <person name="Swarbreck D."/>
            <person name="Ashurst J.L."/>
            <person name="Taylor A."/>
            <person name="Battles J."/>
            <person name="Bird C.P."/>
            <person name="Ainscough R."/>
            <person name="Almeida J.P."/>
            <person name="Ashwell R.I.S."/>
            <person name="Ambrose K.D."/>
            <person name="Babbage A.K."/>
            <person name="Bagguley C.L."/>
            <person name="Bailey J."/>
            <person name="Banerjee R."/>
            <person name="Bates K."/>
            <person name="Beasley H."/>
            <person name="Bray-Allen S."/>
            <person name="Brown A.J."/>
            <person name="Brown J.Y."/>
            <person name="Burford D.C."/>
            <person name="Burrill W."/>
            <person name="Burton J."/>
            <person name="Cahill P."/>
            <person name="Camire D."/>
            <person name="Carter N.P."/>
            <person name="Chapman J.C."/>
            <person name="Clark S.Y."/>
            <person name="Clarke G."/>
            <person name="Clee C.M."/>
            <person name="Clegg S."/>
            <person name="Corby N."/>
            <person name="Coulson A."/>
            <person name="Dhami P."/>
            <person name="Dutta I."/>
            <person name="Dunn M."/>
            <person name="Faulkner L."/>
            <person name="Frankish A."/>
            <person name="Frankland J.A."/>
            <person name="Garner P."/>
            <person name="Garnett J."/>
            <person name="Gribble S."/>
            <person name="Griffiths C."/>
            <person name="Grocock R."/>
            <person name="Gustafson E."/>
            <person name="Hammond S."/>
            <person name="Harley J.L."/>
            <person name="Hart E."/>
            <person name="Heath P.D."/>
            <person name="Ho T.P."/>
            <person name="Hopkins B."/>
            <person name="Horne J."/>
            <person name="Howden P.J."/>
            <person name="Huckle E."/>
            <person name="Hynds C."/>
            <person name="Johnson C."/>
            <person name="Johnson D."/>
            <person name="Kana A."/>
            <person name="Kay M."/>
            <person name="Kimberley A.M."/>
            <person name="Kershaw J.K."/>
            <person name="Kokkinaki M."/>
            <person name="Laird G.K."/>
            <person name="Lawlor S."/>
            <person name="Lee H.M."/>
            <person name="Leongamornlert D.A."/>
            <person name="Laird G."/>
            <person name="Lloyd C."/>
            <person name="Lloyd D.M."/>
            <person name="Loveland J."/>
            <person name="Lovell J."/>
            <person name="McLaren S."/>
            <person name="McLay K.E."/>
            <person name="McMurray A."/>
            <person name="Mashreghi-Mohammadi M."/>
            <person name="Matthews L."/>
            <person name="Milne S."/>
            <person name="Nickerson T."/>
            <person name="Nguyen M."/>
            <person name="Overton-Larty E."/>
            <person name="Palmer S.A."/>
            <person name="Pearce A.V."/>
            <person name="Peck A.I."/>
            <person name="Pelan S."/>
            <person name="Phillimore B."/>
            <person name="Porter K."/>
            <person name="Rice C.M."/>
            <person name="Rogosin A."/>
            <person name="Ross M.T."/>
            <person name="Sarafidou T."/>
            <person name="Sehra H.K."/>
            <person name="Shownkeen R."/>
            <person name="Skuce C.D."/>
            <person name="Smith M."/>
            <person name="Standring L."/>
            <person name="Sycamore N."/>
            <person name="Tester J."/>
            <person name="Thorpe A."/>
            <person name="Torcasso W."/>
            <person name="Tracey A."/>
            <person name="Tromans A."/>
            <person name="Tsolas J."/>
            <person name="Wall M."/>
            <person name="Walsh J."/>
            <person name="Wang H."/>
            <person name="Weinstock K."/>
            <person name="West A.P."/>
            <person name="Willey D.L."/>
            <person name="Whitehead S.L."/>
            <person name="Wilming L."/>
            <person name="Wray P.W."/>
            <person name="Young L."/>
            <person name="Chen Y."/>
            <person name="Lovering R.C."/>
            <person name="Moschonas N.K."/>
            <person name="Siebert R."/>
            <person name="Fechtel K."/>
            <person name="Bentley D."/>
            <person name="Durbin R.M."/>
            <person name="Hubbard T."/>
            <person name="Doucette-Stamm L."/>
            <person name="Beck S."/>
            <person name="Smith D.R."/>
            <person name="Rogers J."/>
        </authorList>
    </citation>
    <scope>NUCLEOTIDE SEQUENCE [LARGE SCALE GENOMIC DNA]</scope>
</reference>
<reference key="8">
    <citation type="submission" date="2005-09" db="EMBL/GenBank/DDBJ databases">
        <authorList>
            <person name="Mural R.J."/>
            <person name="Istrail S."/>
            <person name="Sutton G.G."/>
            <person name="Florea L."/>
            <person name="Halpern A.L."/>
            <person name="Mobarry C.M."/>
            <person name="Lippert R."/>
            <person name="Walenz B."/>
            <person name="Shatkay H."/>
            <person name="Dew I."/>
            <person name="Miller J.R."/>
            <person name="Flanigan M.J."/>
            <person name="Edwards N.J."/>
            <person name="Bolanos R."/>
            <person name="Fasulo D."/>
            <person name="Halldorsson B.V."/>
            <person name="Hannenhalli S."/>
            <person name="Turner R."/>
            <person name="Yooseph S."/>
            <person name="Lu F."/>
            <person name="Nusskern D.R."/>
            <person name="Shue B.C."/>
            <person name="Zheng X.H."/>
            <person name="Zhong F."/>
            <person name="Delcher A.L."/>
            <person name="Huson D.H."/>
            <person name="Kravitz S.A."/>
            <person name="Mouchard L."/>
            <person name="Reinert K."/>
            <person name="Remington K.A."/>
            <person name="Clark A.G."/>
            <person name="Waterman M.S."/>
            <person name="Eichler E.E."/>
            <person name="Adams M.D."/>
            <person name="Hunkapiller M.W."/>
            <person name="Myers E.W."/>
            <person name="Venter J.C."/>
        </authorList>
    </citation>
    <scope>NUCLEOTIDE SEQUENCE [LARGE SCALE GENOMIC DNA]</scope>
</reference>
<reference key="9">
    <citation type="journal article" date="2004" name="Genome Res.">
        <title>The status, quality, and expansion of the NIH full-length cDNA project: the Mammalian Gene Collection (MGC).</title>
        <authorList>
            <consortium name="The MGC Project Team"/>
        </authorList>
    </citation>
    <scope>NUCLEOTIDE SEQUENCE [LARGE SCALE MRNA] (ISOFORM 3)</scope>
    <source>
        <tissue>Brain</tissue>
    </source>
</reference>
<reference key="10">
    <citation type="journal article" date="1996" name="Nucleic Acids Res.">
        <title>Identification of a (CUG)n triplet repeat RNA-binding protein and its expression in myotonic dystrophy.</title>
        <authorList>
            <person name="Timchenko L.T."/>
            <person name="Miller J.W."/>
            <person name="Timchenko N.A."/>
            <person name="DeVore D.R."/>
            <person name="Datar K.V."/>
            <person name="Lin L."/>
            <person name="Roberts R."/>
            <person name="Caskey C.T."/>
            <person name="Swanson M.S."/>
        </authorList>
    </citation>
    <scope>SUBCELLULAR LOCATION</scope>
    <scope>RNA-BINDING</scope>
</reference>
<reference key="11">
    <citation type="journal article" date="2001" name="J. Biol. Chem.">
        <title>Novel role for RNA-binding protein CUGBP2 in mammalian RNA editing. CUGBP2 modulates C to U editing of apolipoprotein B mRNA by interacting with apobec-1 and ACF, the apobec-1 complementation factor.</title>
        <authorList>
            <person name="Anant S."/>
            <person name="Henderson J.O."/>
            <person name="Mukhopadhyay D."/>
            <person name="Navaratnam N."/>
            <person name="Kennedy S."/>
            <person name="Min J."/>
            <person name="Davidson N.O."/>
        </authorList>
    </citation>
    <scope>FUNCTION</scope>
    <scope>RNA-BINDING</scope>
    <scope>SUBCELLULAR LOCATION</scope>
</reference>
<reference key="12">
    <citation type="journal article" date="2001" name="Mol. Cell. Biol.">
        <title>The CELF family of RNA binding proteins is implicated in cell-specific and developmentally regulated alternative splicing.</title>
        <authorList>
            <person name="Ladd A.N."/>
            <person name="Charlet-B N."/>
            <person name="Cooper T.A."/>
        </authorList>
    </citation>
    <scope>FUNCTION</scope>
    <scope>RNA-BINDING</scope>
    <scope>TISSUE SPECIFICITY</scope>
</reference>
<reference key="13">
    <citation type="journal article" date="2002" name="Mol. Cell">
        <title>Dynamic antagonism between ETR-3 and PTB regulates cell type-specific alternative splicing.</title>
        <authorList>
            <person name="Charlet-B N."/>
            <person name="Logan P."/>
            <person name="Singh G."/>
            <person name="Cooper T.A."/>
        </authorList>
    </citation>
    <scope>FUNCTION</scope>
    <scope>RNA-BINDING</scope>
</reference>
<reference key="14">
    <citation type="journal article" date="2003" name="RNA">
        <title>Antagonistic regulation of alpha-actinin alternative splicing by CELF proteins and polypyrimidine tract binding protein.</title>
        <authorList>
            <person name="Gromak N."/>
            <person name="Matlin A.J."/>
            <person name="Cooper T.A."/>
            <person name="Smith C.W."/>
        </authorList>
    </citation>
    <scope>FUNCTION</scope>
    <scope>RNA-BINDING</scope>
</reference>
<reference key="15">
    <citation type="journal article" date="2004" name="Nucleic Acids Res.">
        <title>ETR-3 and CELF4 protein domains required for RNA binding and splicing activity in vivo.</title>
        <authorList>
            <person name="Singh G."/>
            <person name="Charlet-B N."/>
            <person name="Han J."/>
            <person name="Cooper T.A."/>
        </authorList>
    </citation>
    <scope>FUNCTION</scope>
    <scope>SUBCELLULAR LOCATION</scope>
    <scope>RNA-BINDING</scope>
</reference>
<reference key="16">
    <citation type="journal article" date="2005" name="Mol. Cell. Biol.">
        <title>Identification of putative new splicing targets for ETR-3 using sequences identified by systematic evolution of ligands by exponential enrichment.</title>
        <authorList>
            <person name="Faustino N.A."/>
            <person name="Cooper T.A."/>
        </authorList>
    </citation>
    <scope>FUNCTION</scope>
    <scope>RNA-BINDING</scope>
</reference>
<reference key="17">
    <citation type="journal article" date="2005" name="Nucleic Acids Res.">
        <title>Identification of CELF splicing activation and repression domains in vivo.</title>
        <authorList>
            <person name="Han J."/>
            <person name="Cooper T.A."/>
        </authorList>
    </citation>
    <scope>FUNCTION</scope>
</reference>
<reference key="18">
    <citation type="journal article" date="2006" name="J. Neurosci. Res.">
        <title>ETR-3 represses Tau exons 2/3 inclusion, a splicing event abnormally enhanced in myotonic dystrophy type I.</title>
        <authorList>
            <person name="Leroy O."/>
            <person name="Dhaenens C.-M."/>
            <person name="Schraen-Maschke S."/>
            <person name="Belarbi K."/>
            <person name="Delacourte A."/>
            <person name="Andreadis A."/>
            <person name="Sablonniere B."/>
            <person name="Buee L."/>
            <person name="Sergeant N."/>
            <person name="Caillet-Boudin M.-L."/>
        </authorList>
    </citation>
    <scope>TISSUE SPECIFICITY</scope>
</reference>
<reference key="19">
    <citation type="journal article" date="2011" name="BMC Syst. Biol.">
        <title>Initial characterization of the human central proteome.</title>
        <authorList>
            <person name="Burkard T.R."/>
            <person name="Planyavsky M."/>
            <person name="Kaupe I."/>
            <person name="Breitwieser F.P."/>
            <person name="Buerckstuemmer T."/>
            <person name="Bennett K.L."/>
            <person name="Superti-Furga G."/>
            <person name="Colinge J."/>
        </authorList>
    </citation>
    <scope>IDENTIFICATION BY MASS SPECTROMETRY [LARGE SCALE ANALYSIS]</scope>
</reference>
<reference key="20">
    <citation type="journal article" date="2017" name="Mol. Cell">
        <title>A Compendium of RNA-Binding Proteins that Regulate MicroRNA Biogenesis.</title>
        <authorList>
            <person name="Treiber T."/>
            <person name="Treiber N."/>
            <person name="Plessmann U."/>
            <person name="Harlander S."/>
            <person name="Daiss J.L."/>
            <person name="Eichner N."/>
            <person name="Lehmann G."/>
            <person name="Schall K."/>
            <person name="Urlaub H."/>
            <person name="Meister G."/>
        </authorList>
    </citation>
    <scope>FUNCTION</scope>
    <scope>MIRNA-BINDING</scope>
</reference>
<reference key="21">
    <citation type="journal article" date="2021" name="Hum. Mutat.">
        <title>De novo variants in CELF2 that disrupt the nuclear localization signal cause developmental and epileptic encephalopathy.</title>
        <authorList>
            <person name="Itai T."/>
            <person name="Hamanaka K."/>
            <person name="Sasaki K."/>
            <person name="Wagner M."/>
            <person name="Kotzaeridou U."/>
            <person name="Broesse I."/>
            <person name="Ries M."/>
            <person name="Kobayashi Y."/>
            <person name="Tohyama J."/>
            <person name="Kato M."/>
            <person name="Ong W.P."/>
            <person name="Chew H.B."/>
            <person name="Rethanavelu K."/>
            <person name="Ranza E."/>
            <person name="Blanc X."/>
            <person name="Uchiyama Y."/>
            <person name="Tsuchida N."/>
            <person name="Fujita A."/>
            <person name="Azuma Y."/>
            <person name="Koshimizu E."/>
            <person name="Mizuguchi T."/>
            <person name="Takata A."/>
            <person name="Miyake N."/>
            <person name="Takahashi H."/>
            <person name="Miyagi E."/>
            <person name="Tsurusaki Y."/>
            <person name="Doi H."/>
            <person name="Taguri M."/>
            <person name="Antonarakis S.E."/>
            <person name="Nakashima M."/>
            <person name="Saitsu H."/>
            <person name="Miyatake S."/>
            <person name="Matsumoto N."/>
        </authorList>
    </citation>
    <scope>INVOLVEMENT IN DEE97</scope>
    <scope>VARIANTS DEE97 GLY-493 AND SER-507</scope>
    <scope>CHARACTERIZATION OF VARIANTS DEE97 GLY-493 AND SER-507</scope>
    <scope>SUBCELLULAR LOCATION</scope>
</reference>
<organism>
    <name type="scientific">Homo sapiens</name>
    <name type="common">Human</name>
    <dbReference type="NCBI Taxonomy" id="9606"/>
    <lineage>
        <taxon>Eukaryota</taxon>
        <taxon>Metazoa</taxon>
        <taxon>Chordata</taxon>
        <taxon>Craniata</taxon>
        <taxon>Vertebrata</taxon>
        <taxon>Euteleostomi</taxon>
        <taxon>Mammalia</taxon>
        <taxon>Eutheria</taxon>
        <taxon>Euarchontoglires</taxon>
        <taxon>Primates</taxon>
        <taxon>Haplorrhini</taxon>
        <taxon>Catarrhini</taxon>
        <taxon>Hominidae</taxon>
        <taxon>Homo</taxon>
    </lineage>
</organism>